<evidence type="ECO:0000255" key="1">
    <source>
        <dbReference type="HAMAP-Rule" id="MF_00362"/>
    </source>
</evidence>
<evidence type="ECO:0000305" key="2"/>
<organism>
    <name type="scientific">Thioalkalivibrio sulfidiphilus (strain HL-EbGR7)</name>
    <dbReference type="NCBI Taxonomy" id="396588"/>
    <lineage>
        <taxon>Bacteria</taxon>
        <taxon>Pseudomonadati</taxon>
        <taxon>Pseudomonadota</taxon>
        <taxon>Gammaproteobacteria</taxon>
        <taxon>Chromatiales</taxon>
        <taxon>Ectothiorhodospiraceae</taxon>
        <taxon>Thioalkalivibrio</taxon>
    </lineage>
</organism>
<comment type="function">
    <text evidence="1">Forms part of the ribosomal stalk, playing a central role in the interaction of the ribosome with GTP-bound translation factors.</text>
</comment>
<comment type="subunit">
    <text evidence="1">Part of the ribosomal stalk of the 50S ribosomal subunit. The N-terminus interacts with L11 and the large rRNA to form the base of the stalk. The C-terminus forms an elongated spine to which L12 dimers bind in a sequential fashion forming a multimeric L10(L12)X complex.</text>
</comment>
<comment type="similarity">
    <text evidence="1">Belongs to the universal ribosomal protein uL10 family.</text>
</comment>
<feature type="chain" id="PRO_1000195574" description="Large ribosomal subunit protein uL10">
    <location>
        <begin position="1"/>
        <end position="176"/>
    </location>
</feature>
<gene>
    <name evidence="1" type="primary">rplJ</name>
    <name type="ordered locus">Tgr7_2333</name>
</gene>
<sequence length="176" mass="18880">MPLNLEDKKAIVSEVAAVAASAHSAVAAEYRGLTVTEMTELRAKARQSNVYLRVVKNSLARRAVEGTDFACMQEGLVGPLVLAFSQDDPGAAARLVKDFAKEHKKLEVKLVSVGGQLLGPGELERLASMPTRDQAISLLMAVMKAPLDKFARTLNEVPGKLVRTVAAIRDQKQASA</sequence>
<reference key="1">
    <citation type="journal article" date="2011" name="Stand. Genomic Sci.">
        <title>Complete genome sequence of 'Thioalkalivibrio sulfidophilus' HL-EbGr7.</title>
        <authorList>
            <person name="Muyzer G."/>
            <person name="Sorokin D.Y."/>
            <person name="Mavromatis K."/>
            <person name="Lapidus A."/>
            <person name="Clum A."/>
            <person name="Ivanova N."/>
            <person name="Pati A."/>
            <person name="d'Haeseleer P."/>
            <person name="Woyke T."/>
            <person name="Kyrpides N.C."/>
        </authorList>
    </citation>
    <scope>NUCLEOTIDE SEQUENCE [LARGE SCALE GENOMIC DNA]</scope>
    <source>
        <strain>HL-EbGR7</strain>
    </source>
</reference>
<keyword id="KW-1185">Reference proteome</keyword>
<keyword id="KW-0687">Ribonucleoprotein</keyword>
<keyword id="KW-0689">Ribosomal protein</keyword>
<keyword id="KW-0694">RNA-binding</keyword>
<keyword id="KW-0699">rRNA-binding</keyword>
<name>RL10_THISH</name>
<proteinExistence type="inferred from homology"/>
<protein>
    <recommendedName>
        <fullName evidence="1">Large ribosomal subunit protein uL10</fullName>
    </recommendedName>
    <alternativeName>
        <fullName evidence="2">50S ribosomal protein L10</fullName>
    </alternativeName>
</protein>
<accession>B8GV67</accession>
<dbReference type="EMBL" id="CP001339">
    <property type="protein sequence ID" value="ACL73413.1"/>
    <property type="molecule type" value="Genomic_DNA"/>
</dbReference>
<dbReference type="SMR" id="B8GV67"/>
<dbReference type="STRING" id="396588.Tgr7_2333"/>
<dbReference type="KEGG" id="tgr:Tgr7_2333"/>
<dbReference type="eggNOG" id="COG0244">
    <property type="taxonomic scope" value="Bacteria"/>
</dbReference>
<dbReference type="HOGENOM" id="CLU_092227_0_1_6"/>
<dbReference type="OrthoDB" id="9808307at2"/>
<dbReference type="Proteomes" id="UP000002383">
    <property type="component" value="Chromosome"/>
</dbReference>
<dbReference type="GO" id="GO:0015934">
    <property type="term" value="C:large ribosomal subunit"/>
    <property type="evidence" value="ECO:0007669"/>
    <property type="project" value="InterPro"/>
</dbReference>
<dbReference type="GO" id="GO:0070180">
    <property type="term" value="F:large ribosomal subunit rRNA binding"/>
    <property type="evidence" value="ECO:0007669"/>
    <property type="project" value="UniProtKB-UniRule"/>
</dbReference>
<dbReference type="GO" id="GO:0003735">
    <property type="term" value="F:structural constituent of ribosome"/>
    <property type="evidence" value="ECO:0007669"/>
    <property type="project" value="InterPro"/>
</dbReference>
<dbReference type="GO" id="GO:0006412">
    <property type="term" value="P:translation"/>
    <property type="evidence" value="ECO:0007669"/>
    <property type="project" value="UniProtKB-UniRule"/>
</dbReference>
<dbReference type="CDD" id="cd05797">
    <property type="entry name" value="Ribosomal_L10"/>
    <property type="match status" value="1"/>
</dbReference>
<dbReference type="Gene3D" id="3.30.70.1730">
    <property type="match status" value="1"/>
</dbReference>
<dbReference type="Gene3D" id="6.10.250.2350">
    <property type="match status" value="1"/>
</dbReference>
<dbReference type="HAMAP" id="MF_00362">
    <property type="entry name" value="Ribosomal_uL10"/>
    <property type="match status" value="1"/>
</dbReference>
<dbReference type="InterPro" id="IPR001790">
    <property type="entry name" value="Ribosomal_uL10"/>
</dbReference>
<dbReference type="InterPro" id="IPR043141">
    <property type="entry name" value="Ribosomal_uL10-like_sf"/>
</dbReference>
<dbReference type="InterPro" id="IPR022973">
    <property type="entry name" value="Ribosomal_uL10_bac"/>
</dbReference>
<dbReference type="InterPro" id="IPR047865">
    <property type="entry name" value="Ribosomal_uL10_bac_type"/>
</dbReference>
<dbReference type="InterPro" id="IPR002363">
    <property type="entry name" value="Ribosomal_uL10_CS_bac"/>
</dbReference>
<dbReference type="NCBIfam" id="NF000955">
    <property type="entry name" value="PRK00099.1-1"/>
    <property type="match status" value="1"/>
</dbReference>
<dbReference type="PANTHER" id="PTHR11560">
    <property type="entry name" value="39S RIBOSOMAL PROTEIN L10, MITOCHONDRIAL"/>
    <property type="match status" value="1"/>
</dbReference>
<dbReference type="Pfam" id="PF00466">
    <property type="entry name" value="Ribosomal_L10"/>
    <property type="match status" value="1"/>
</dbReference>
<dbReference type="SUPFAM" id="SSF160369">
    <property type="entry name" value="Ribosomal protein L10-like"/>
    <property type="match status" value="1"/>
</dbReference>
<dbReference type="PROSITE" id="PS01109">
    <property type="entry name" value="RIBOSOMAL_L10"/>
    <property type="match status" value="1"/>
</dbReference>